<keyword id="KW-1185">Reference proteome</keyword>
<comment type="similarity">
    <text evidence="1">Belongs to the UPF0125 (RnfH) family.</text>
</comment>
<name>Y4512_PSESM</name>
<feature type="chain" id="PRO_0000192497" description="UPF0125 protein PSPTO_4512">
    <location>
        <begin position="1"/>
        <end position="104"/>
    </location>
</feature>
<protein>
    <recommendedName>
        <fullName evidence="1">UPF0125 protein PSPTO_4512</fullName>
    </recommendedName>
</protein>
<proteinExistence type="inferred from homology"/>
<evidence type="ECO:0000255" key="1">
    <source>
        <dbReference type="HAMAP-Rule" id="MF_00460"/>
    </source>
</evidence>
<dbReference type="EMBL" id="AE016853">
    <property type="protein sequence ID" value="AAO57960.1"/>
    <property type="molecule type" value="Genomic_DNA"/>
</dbReference>
<dbReference type="RefSeq" id="NP_794265.1">
    <property type="nucleotide sequence ID" value="NC_004578.1"/>
</dbReference>
<dbReference type="RefSeq" id="WP_011105028.1">
    <property type="nucleotide sequence ID" value="NC_004578.1"/>
</dbReference>
<dbReference type="SMR" id="Q87WN4"/>
<dbReference type="STRING" id="223283.PSPTO_4512"/>
<dbReference type="GeneID" id="1186195"/>
<dbReference type="KEGG" id="pst:PSPTO_4512"/>
<dbReference type="PATRIC" id="fig|223283.9.peg.4628"/>
<dbReference type="eggNOG" id="COG2914">
    <property type="taxonomic scope" value="Bacteria"/>
</dbReference>
<dbReference type="HOGENOM" id="CLU_150721_1_0_6"/>
<dbReference type="OrthoDB" id="9796575at2"/>
<dbReference type="PhylomeDB" id="Q87WN4"/>
<dbReference type="Proteomes" id="UP000002515">
    <property type="component" value="Chromosome"/>
</dbReference>
<dbReference type="Gene3D" id="3.10.20.280">
    <property type="entry name" value="RnfH-like"/>
    <property type="match status" value="1"/>
</dbReference>
<dbReference type="HAMAP" id="MF_00460">
    <property type="entry name" value="UPF0125_RnfH"/>
    <property type="match status" value="1"/>
</dbReference>
<dbReference type="InterPro" id="IPR016155">
    <property type="entry name" value="Mopterin_synth/thiamin_S_b"/>
</dbReference>
<dbReference type="InterPro" id="IPR005346">
    <property type="entry name" value="RnfH"/>
</dbReference>
<dbReference type="InterPro" id="IPR037021">
    <property type="entry name" value="RnfH_sf"/>
</dbReference>
<dbReference type="NCBIfam" id="NF002490">
    <property type="entry name" value="PRK01777.1"/>
    <property type="match status" value="1"/>
</dbReference>
<dbReference type="PANTHER" id="PTHR37483">
    <property type="entry name" value="UPF0125 PROTEIN RATB"/>
    <property type="match status" value="1"/>
</dbReference>
<dbReference type="PANTHER" id="PTHR37483:SF1">
    <property type="entry name" value="UPF0125 PROTEIN RATB"/>
    <property type="match status" value="1"/>
</dbReference>
<dbReference type="Pfam" id="PF03658">
    <property type="entry name" value="Ub-RnfH"/>
    <property type="match status" value="1"/>
</dbReference>
<dbReference type="SUPFAM" id="SSF54285">
    <property type="entry name" value="MoaD/ThiS"/>
    <property type="match status" value="1"/>
</dbReference>
<sequence length="104" mass="11429">MAEASIQIEVVYATVQRQVLMTVDVPAGSSVRQALALCGMDREFPELDLSHCPVGIFGKVVADPAARVLEAGERIEIYRPLLADPMEIRRLRAAKAREKRTLPG</sequence>
<reference key="1">
    <citation type="journal article" date="2003" name="Proc. Natl. Acad. Sci. U.S.A.">
        <title>The complete genome sequence of the Arabidopsis and tomato pathogen Pseudomonas syringae pv. tomato DC3000.</title>
        <authorList>
            <person name="Buell C.R."/>
            <person name="Joardar V."/>
            <person name="Lindeberg M."/>
            <person name="Selengut J."/>
            <person name="Paulsen I.T."/>
            <person name="Gwinn M.L."/>
            <person name="Dodson R.J."/>
            <person name="DeBoy R.T."/>
            <person name="Durkin A.S."/>
            <person name="Kolonay J.F."/>
            <person name="Madupu R."/>
            <person name="Daugherty S.C."/>
            <person name="Brinkac L.M."/>
            <person name="Beanan M.J."/>
            <person name="Haft D.H."/>
            <person name="Nelson W.C."/>
            <person name="Davidsen T.M."/>
            <person name="Zafar N."/>
            <person name="Zhou L."/>
            <person name="Liu J."/>
            <person name="Yuan Q."/>
            <person name="Khouri H.M."/>
            <person name="Fedorova N.B."/>
            <person name="Tran B."/>
            <person name="Russell D."/>
            <person name="Berry K.J."/>
            <person name="Utterback T.R."/>
            <person name="Van Aken S.E."/>
            <person name="Feldblyum T.V."/>
            <person name="D'Ascenzo M."/>
            <person name="Deng W.-L."/>
            <person name="Ramos A.R."/>
            <person name="Alfano J.R."/>
            <person name="Cartinhour S."/>
            <person name="Chatterjee A.K."/>
            <person name="Delaney T.P."/>
            <person name="Lazarowitz S.G."/>
            <person name="Martin G.B."/>
            <person name="Schneider D.J."/>
            <person name="Tang X."/>
            <person name="Bender C.L."/>
            <person name="White O."/>
            <person name="Fraser C.M."/>
            <person name="Collmer A."/>
        </authorList>
    </citation>
    <scope>NUCLEOTIDE SEQUENCE [LARGE SCALE GENOMIC DNA]</scope>
    <source>
        <strain>ATCC BAA-871 / DC3000</strain>
    </source>
</reference>
<organism>
    <name type="scientific">Pseudomonas syringae pv. tomato (strain ATCC BAA-871 / DC3000)</name>
    <dbReference type="NCBI Taxonomy" id="223283"/>
    <lineage>
        <taxon>Bacteria</taxon>
        <taxon>Pseudomonadati</taxon>
        <taxon>Pseudomonadota</taxon>
        <taxon>Gammaproteobacteria</taxon>
        <taxon>Pseudomonadales</taxon>
        <taxon>Pseudomonadaceae</taxon>
        <taxon>Pseudomonas</taxon>
    </lineage>
</organism>
<accession>Q87WN4</accession>
<gene>
    <name type="ordered locus">PSPTO_4512</name>
</gene>